<keyword id="KW-1185">Reference proteome</keyword>
<comment type="similarity">
    <text evidence="1">Belongs to the Mu gp47/PBSX XkdT family.</text>
</comment>
<protein>
    <recommendedName>
        <fullName>Uncharacterized protein YqbT</fullName>
    </recommendedName>
</protein>
<proteinExistence type="inferred from homology"/>
<dbReference type="EMBL" id="D32216">
    <property type="protein sequence ID" value="BAA06952.1"/>
    <property type="molecule type" value="Genomic_DNA"/>
</dbReference>
<dbReference type="EMBL" id="D84432">
    <property type="protein sequence ID" value="BAA12416.1"/>
    <property type="molecule type" value="Genomic_DNA"/>
</dbReference>
<dbReference type="EMBL" id="AL009126">
    <property type="protein sequence ID" value="CAB14539.1"/>
    <property type="molecule type" value="Genomic_DNA"/>
</dbReference>
<dbReference type="PIR" id="G69948">
    <property type="entry name" value="G69948"/>
</dbReference>
<dbReference type="RefSeq" id="NP_390475.1">
    <property type="nucleotide sequence ID" value="NC_000964.3"/>
</dbReference>
<dbReference type="RefSeq" id="WP_003229940.1">
    <property type="nucleotide sequence ID" value="NZ_OZ025638.1"/>
</dbReference>
<dbReference type="SMR" id="P45935"/>
<dbReference type="FunCoup" id="P45935">
    <property type="interactions" value="58"/>
</dbReference>
<dbReference type="STRING" id="224308.BSU25980"/>
<dbReference type="PaxDb" id="224308-BSU25980"/>
<dbReference type="EnsemblBacteria" id="CAB14539">
    <property type="protein sequence ID" value="CAB14539"/>
    <property type="gene ID" value="BSU_25980"/>
</dbReference>
<dbReference type="GeneID" id="937758"/>
<dbReference type="KEGG" id="bsu:BSU25980"/>
<dbReference type="PATRIC" id="fig|224308.179.peg.2823"/>
<dbReference type="eggNOG" id="COG3299">
    <property type="taxonomic scope" value="Bacteria"/>
</dbReference>
<dbReference type="InParanoid" id="P45935"/>
<dbReference type="OrthoDB" id="2554267at2"/>
<dbReference type="PhylomeDB" id="P45935"/>
<dbReference type="BioCyc" id="BSUB:BSU25980-MONOMER"/>
<dbReference type="Proteomes" id="UP000001570">
    <property type="component" value="Chromosome"/>
</dbReference>
<dbReference type="InterPro" id="IPR006949">
    <property type="entry name" value="Baseplate_J-like"/>
</dbReference>
<dbReference type="InterPro" id="IPR052399">
    <property type="entry name" value="Phage_Baseplate_Assmbl_Protein"/>
</dbReference>
<dbReference type="PANTHER" id="PTHR37829">
    <property type="entry name" value="PHAGE-LIKE ELEMENT PBSX PROTEIN XKDT"/>
    <property type="match status" value="1"/>
</dbReference>
<dbReference type="PANTHER" id="PTHR37829:SF3">
    <property type="entry name" value="PROTEIN JAYE-RELATED"/>
    <property type="match status" value="1"/>
</dbReference>
<dbReference type="Pfam" id="PF04865">
    <property type="entry name" value="Baseplate_J"/>
    <property type="match status" value="1"/>
</dbReference>
<reference key="1">
    <citation type="journal article" date="1995" name="Microbiology">
        <title>Complete nucleotide sequence of a skin element excised by DNA rearrangement during sporulation in Bacillus subtilis.</title>
        <authorList>
            <person name="Takemaru K."/>
            <person name="Mizuno M."/>
            <person name="Sato T."/>
            <person name="Takeuchi M."/>
            <person name="Kobayashi Y."/>
        </authorList>
    </citation>
    <scope>NUCLEOTIDE SEQUENCE [GENOMIC DNA]</scope>
    <source>
        <strain>168 / JH642</strain>
    </source>
</reference>
<reference key="2">
    <citation type="journal article" date="1996" name="Microbiology">
        <title>Systematic sequencing of the 283 kb 210 degrees-232 degrees region of the Bacillus subtilis genome containing the skin element and many sporulation genes.</title>
        <authorList>
            <person name="Mizuno M."/>
            <person name="Masuda S."/>
            <person name="Takemaru K."/>
            <person name="Hosono S."/>
            <person name="Sato T."/>
            <person name="Takeuchi M."/>
            <person name="Kobayashi Y."/>
        </authorList>
    </citation>
    <scope>NUCLEOTIDE SEQUENCE [GENOMIC DNA]</scope>
    <source>
        <strain>168 / JH642</strain>
    </source>
</reference>
<reference key="3">
    <citation type="journal article" date="1997" name="Nature">
        <title>The complete genome sequence of the Gram-positive bacterium Bacillus subtilis.</title>
        <authorList>
            <person name="Kunst F."/>
            <person name="Ogasawara N."/>
            <person name="Moszer I."/>
            <person name="Albertini A.M."/>
            <person name="Alloni G."/>
            <person name="Azevedo V."/>
            <person name="Bertero M.G."/>
            <person name="Bessieres P."/>
            <person name="Bolotin A."/>
            <person name="Borchert S."/>
            <person name="Borriss R."/>
            <person name="Boursier L."/>
            <person name="Brans A."/>
            <person name="Braun M."/>
            <person name="Brignell S.C."/>
            <person name="Bron S."/>
            <person name="Brouillet S."/>
            <person name="Bruschi C.V."/>
            <person name="Caldwell B."/>
            <person name="Capuano V."/>
            <person name="Carter N.M."/>
            <person name="Choi S.-K."/>
            <person name="Codani J.-J."/>
            <person name="Connerton I.F."/>
            <person name="Cummings N.J."/>
            <person name="Daniel R.A."/>
            <person name="Denizot F."/>
            <person name="Devine K.M."/>
            <person name="Duesterhoeft A."/>
            <person name="Ehrlich S.D."/>
            <person name="Emmerson P.T."/>
            <person name="Entian K.-D."/>
            <person name="Errington J."/>
            <person name="Fabret C."/>
            <person name="Ferrari E."/>
            <person name="Foulger D."/>
            <person name="Fritz C."/>
            <person name="Fujita M."/>
            <person name="Fujita Y."/>
            <person name="Fuma S."/>
            <person name="Galizzi A."/>
            <person name="Galleron N."/>
            <person name="Ghim S.-Y."/>
            <person name="Glaser P."/>
            <person name="Goffeau A."/>
            <person name="Golightly E.J."/>
            <person name="Grandi G."/>
            <person name="Guiseppi G."/>
            <person name="Guy B.J."/>
            <person name="Haga K."/>
            <person name="Haiech J."/>
            <person name="Harwood C.R."/>
            <person name="Henaut A."/>
            <person name="Hilbert H."/>
            <person name="Holsappel S."/>
            <person name="Hosono S."/>
            <person name="Hullo M.-F."/>
            <person name="Itaya M."/>
            <person name="Jones L.-M."/>
            <person name="Joris B."/>
            <person name="Karamata D."/>
            <person name="Kasahara Y."/>
            <person name="Klaerr-Blanchard M."/>
            <person name="Klein C."/>
            <person name="Kobayashi Y."/>
            <person name="Koetter P."/>
            <person name="Koningstein G."/>
            <person name="Krogh S."/>
            <person name="Kumano M."/>
            <person name="Kurita K."/>
            <person name="Lapidus A."/>
            <person name="Lardinois S."/>
            <person name="Lauber J."/>
            <person name="Lazarevic V."/>
            <person name="Lee S.-M."/>
            <person name="Levine A."/>
            <person name="Liu H."/>
            <person name="Masuda S."/>
            <person name="Mauel C."/>
            <person name="Medigue C."/>
            <person name="Medina N."/>
            <person name="Mellado R.P."/>
            <person name="Mizuno M."/>
            <person name="Moestl D."/>
            <person name="Nakai S."/>
            <person name="Noback M."/>
            <person name="Noone D."/>
            <person name="O'Reilly M."/>
            <person name="Ogawa K."/>
            <person name="Ogiwara A."/>
            <person name="Oudega B."/>
            <person name="Park S.-H."/>
            <person name="Parro V."/>
            <person name="Pohl T.M."/>
            <person name="Portetelle D."/>
            <person name="Porwollik S."/>
            <person name="Prescott A.M."/>
            <person name="Presecan E."/>
            <person name="Pujic P."/>
            <person name="Purnelle B."/>
            <person name="Rapoport G."/>
            <person name="Rey M."/>
            <person name="Reynolds S."/>
            <person name="Rieger M."/>
            <person name="Rivolta C."/>
            <person name="Rocha E."/>
            <person name="Roche B."/>
            <person name="Rose M."/>
            <person name="Sadaie Y."/>
            <person name="Sato T."/>
            <person name="Scanlan E."/>
            <person name="Schleich S."/>
            <person name="Schroeter R."/>
            <person name="Scoffone F."/>
            <person name="Sekiguchi J."/>
            <person name="Sekowska A."/>
            <person name="Seror S.J."/>
            <person name="Serror P."/>
            <person name="Shin B.-S."/>
            <person name="Soldo B."/>
            <person name="Sorokin A."/>
            <person name="Tacconi E."/>
            <person name="Takagi T."/>
            <person name="Takahashi H."/>
            <person name="Takemaru K."/>
            <person name="Takeuchi M."/>
            <person name="Tamakoshi A."/>
            <person name="Tanaka T."/>
            <person name="Terpstra P."/>
            <person name="Tognoni A."/>
            <person name="Tosato V."/>
            <person name="Uchiyama S."/>
            <person name="Vandenbol M."/>
            <person name="Vannier F."/>
            <person name="Vassarotti A."/>
            <person name="Viari A."/>
            <person name="Wambutt R."/>
            <person name="Wedler E."/>
            <person name="Wedler H."/>
            <person name="Weitzenegger T."/>
            <person name="Winters P."/>
            <person name="Wipat A."/>
            <person name="Yamamoto H."/>
            <person name="Yamane K."/>
            <person name="Yasumoto K."/>
            <person name="Yata K."/>
            <person name="Yoshida K."/>
            <person name="Yoshikawa H.-F."/>
            <person name="Zumstein E."/>
            <person name="Yoshikawa H."/>
            <person name="Danchin A."/>
        </authorList>
    </citation>
    <scope>NUCLEOTIDE SEQUENCE [LARGE SCALE GENOMIC DNA]</scope>
    <source>
        <strain>168</strain>
    </source>
</reference>
<reference key="4">
    <citation type="journal article" date="1995" name="Gene">
        <title>Analysis of a Bacillus subtilis genome fragment using a co-operative computer system prototype.</title>
        <authorList>
            <person name="Medigue C."/>
            <person name="Moszer I."/>
            <person name="Viari A."/>
            <person name="Danchin A."/>
        </authorList>
    </citation>
    <scope>IDENTIFICATION</scope>
</reference>
<accession>P45935</accession>
<organism>
    <name type="scientific">Bacillus subtilis (strain 168)</name>
    <dbReference type="NCBI Taxonomy" id="224308"/>
    <lineage>
        <taxon>Bacteria</taxon>
        <taxon>Bacillati</taxon>
        <taxon>Bacillota</taxon>
        <taxon>Bacilli</taxon>
        <taxon>Bacillales</taxon>
        <taxon>Bacillaceae</taxon>
        <taxon>Bacillus</taxon>
    </lineage>
</organism>
<name>YQBT_BACSU</name>
<evidence type="ECO:0000305" key="1"/>
<feature type="chain" id="PRO_0000077846" description="Uncharacterized protein YqbT">
    <location>
        <begin position="1"/>
        <end position="348"/>
    </location>
</feature>
<sequence>MFEDQTYESIMDRMLNSISADIDKREGSVIYNALAPVAAELAKSYIWLDTVLELVFSDTAQGEFLDRRATEAGIERTAATKAVRAGEFTEGVTIPVGSRFYVDNLYFQYTADGTLECETAGEAGNANISGQNLLSLDTIPGLQKAIVKEILIPGREEEDDDSLRARYFTRVRREAVSANKAHYKQWAEEVDGVGKVKVFPLWNGDGTVKIVVTNANLEPASDILISKVKNYIDPEPGQGEGQAPIGAFVTVESAVWKEVEISAEVLPEVNSSIDQVKQEIESGVLNLFKKIAFEDNVIRLSQINNIVYNSPSVSDYADIKINGVAENLVLSAVEIPKLGQVNIIEQTR</sequence>
<gene>
    <name type="primary">yqbT</name>
    <name type="ordered locus">BSU25980</name>
</gene>